<keyword id="KW-0002">3D-structure</keyword>
<keyword id="KW-1185">Reference proteome</keyword>
<keyword id="KW-0687">Ribonucleoprotein</keyword>
<keyword id="KW-0689">Ribosomal protein</keyword>
<protein>
    <recommendedName>
        <fullName evidence="1">Large ribosomal subunit protein eL18</fullName>
    </recommendedName>
    <alternativeName>
        <fullName>50S ribosomal protein L18e</fullName>
    </alternativeName>
</protein>
<gene>
    <name evidence="1" type="primary">rpl18e</name>
    <name type="ordered locus">PF1646</name>
</gene>
<evidence type="ECO:0000255" key="1">
    <source>
        <dbReference type="HAMAP-Rule" id="MF_00329"/>
    </source>
</evidence>
<evidence type="ECO:0000269" key="2">
    <source>
    </source>
</evidence>
<evidence type="ECO:0007744" key="3">
    <source>
        <dbReference type="PDB" id="4V6U"/>
    </source>
</evidence>
<comment type="subunit">
    <text evidence="2">Part of the 50S ribosomal subunit.</text>
</comment>
<comment type="similarity">
    <text evidence="1">Belongs to the eukaryotic ribosomal protein eL18 family.</text>
</comment>
<feature type="chain" id="PRO_0000132799" description="Large ribosomal subunit protein eL18">
    <location>
        <begin position="1"/>
        <end position="120"/>
    </location>
</feature>
<accession>Q8U0E5</accession>
<organism>
    <name type="scientific">Pyrococcus furiosus (strain ATCC 43587 / DSM 3638 / JCM 8422 / Vc1)</name>
    <dbReference type="NCBI Taxonomy" id="186497"/>
    <lineage>
        <taxon>Archaea</taxon>
        <taxon>Methanobacteriati</taxon>
        <taxon>Methanobacteriota</taxon>
        <taxon>Thermococci</taxon>
        <taxon>Thermococcales</taxon>
        <taxon>Thermococcaceae</taxon>
        <taxon>Pyrococcus</taxon>
    </lineage>
</organism>
<name>RL18E_PYRFU</name>
<reference key="1">
    <citation type="journal article" date="1999" name="Genetics">
        <title>Divergence of the hyperthermophilic archaea Pyrococcus furiosus and P. horikoshii inferred from complete genomic sequences.</title>
        <authorList>
            <person name="Maeder D.L."/>
            <person name="Weiss R.B."/>
            <person name="Dunn D.M."/>
            <person name="Cherry J.L."/>
            <person name="Gonzalez J.M."/>
            <person name="DiRuggiero J."/>
            <person name="Robb F.T."/>
        </authorList>
    </citation>
    <scope>NUCLEOTIDE SEQUENCE [LARGE SCALE GENOMIC DNA]</scope>
    <source>
        <strain>ATCC 43587 / DSM 3638 / JCM 8422 / Vc1</strain>
    </source>
</reference>
<reference evidence="3" key="2">
    <citation type="journal article" date="2013" name="Nucleic Acids Res.">
        <title>Promiscuous behaviour of archaeal ribosomal proteins: implications for eukaryotic ribosome evolution.</title>
        <authorList>
            <person name="Armache J.P."/>
            <person name="Anger A.M."/>
            <person name="Marquez V."/>
            <person name="Franckenberg S."/>
            <person name="Frohlich T."/>
            <person name="Villa E."/>
            <person name="Berninghausen O."/>
            <person name="Thomm M."/>
            <person name="Arnold G.J."/>
            <person name="Beckmann R."/>
            <person name="Wilson D.N."/>
        </authorList>
    </citation>
    <scope>STRUCTURE BY ELECTRON MICROSCOPY (6.60 ANGSTROMS) IN THE 70S RIBOSOME</scope>
    <scope>SUBUNIT</scope>
</reference>
<proteinExistence type="evidence at protein level"/>
<sequence length="120" mass="13732">MKRTGPTDPNLRRLIRYLRKKSNEYGVKIWKDVAWRLERPRRQRAEVNVSKINRYANDGEMIVVPGSVLGAGKLEKKVIVAAWKFSETARRKIIEAGGEAITIEELIERNPTGSGVRIME</sequence>
<dbReference type="EMBL" id="AE009950">
    <property type="protein sequence ID" value="AAL81770.1"/>
    <property type="molecule type" value="Genomic_DNA"/>
</dbReference>
<dbReference type="RefSeq" id="WP_011012793.1">
    <property type="nucleotide sequence ID" value="NZ_CP023154.1"/>
</dbReference>
<dbReference type="PDB" id="4V4N">
    <property type="method" value="EM"/>
    <property type="resolution" value="9.00 A"/>
    <property type="chains" value="P=1-120"/>
</dbReference>
<dbReference type="PDB" id="4V6U">
    <property type="method" value="EM"/>
    <property type="resolution" value="6.60 A"/>
    <property type="chains" value="BP=1-120"/>
</dbReference>
<dbReference type="PDBsum" id="4V4N"/>
<dbReference type="PDBsum" id="4V6U"/>
<dbReference type="SMR" id="Q8U0E5"/>
<dbReference type="STRING" id="186497.PF1646"/>
<dbReference type="PaxDb" id="186497-PF1646"/>
<dbReference type="KEGG" id="pfu:PF1646"/>
<dbReference type="PATRIC" id="fig|186497.12.peg.1712"/>
<dbReference type="eggNOG" id="arCOG00780">
    <property type="taxonomic scope" value="Archaea"/>
</dbReference>
<dbReference type="HOGENOM" id="CLU_146465_0_0_2"/>
<dbReference type="OrthoDB" id="11309at2157"/>
<dbReference type="PhylomeDB" id="Q8U0E5"/>
<dbReference type="Proteomes" id="UP000001013">
    <property type="component" value="Chromosome"/>
</dbReference>
<dbReference type="GO" id="GO:0022625">
    <property type="term" value="C:cytosolic large ribosomal subunit"/>
    <property type="evidence" value="ECO:0007669"/>
    <property type="project" value="TreeGrafter"/>
</dbReference>
<dbReference type="GO" id="GO:0003723">
    <property type="term" value="F:RNA binding"/>
    <property type="evidence" value="ECO:0007669"/>
    <property type="project" value="TreeGrafter"/>
</dbReference>
<dbReference type="GO" id="GO:0003735">
    <property type="term" value="F:structural constituent of ribosome"/>
    <property type="evidence" value="ECO:0007669"/>
    <property type="project" value="InterPro"/>
</dbReference>
<dbReference type="GO" id="GO:0006412">
    <property type="term" value="P:translation"/>
    <property type="evidence" value="ECO:0007669"/>
    <property type="project" value="UniProtKB-UniRule"/>
</dbReference>
<dbReference type="FunFam" id="3.100.10.10:FF:000013">
    <property type="entry name" value="50S ribosomal protein L18e"/>
    <property type="match status" value="1"/>
</dbReference>
<dbReference type="Gene3D" id="3.100.10.10">
    <property type="match status" value="1"/>
</dbReference>
<dbReference type="HAMAP" id="MF_00329">
    <property type="entry name" value="Ribosomal_eL18"/>
    <property type="match status" value="1"/>
</dbReference>
<dbReference type="InterPro" id="IPR000039">
    <property type="entry name" value="Ribosomal_eL18"/>
</dbReference>
<dbReference type="InterPro" id="IPR021132">
    <property type="entry name" value="Ribosomal_eL18/eL18-A/B/_CS"/>
</dbReference>
<dbReference type="InterPro" id="IPR022947">
    <property type="entry name" value="Ribosomal_eL18_arc"/>
</dbReference>
<dbReference type="InterPro" id="IPR021131">
    <property type="entry name" value="Ribosomal_uL15/eL18"/>
</dbReference>
<dbReference type="InterPro" id="IPR036227">
    <property type="entry name" value="Ribosomal_uL15/eL18_sf"/>
</dbReference>
<dbReference type="NCBIfam" id="NF003079">
    <property type="entry name" value="PRK04005.1"/>
    <property type="match status" value="1"/>
</dbReference>
<dbReference type="PANTHER" id="PTHR10934">
    <property type="entry name" value="60S RIBOSOMAL PROTEIN L18"/>
    <property type="match status" value="1"/>
</dbReference>
<dbReference type="PANTHER" id="PTHR10934:SF2">
    <property type="entry name" value="LARGE RIBOSOMAL SUBUNIT PROTEIN EL18"/>
    <property type="match status" value="1"/>
</dbReference>
<dbReference type="Pfam" id="PF17135">
    <property type="entry name" value="Ribosomal_L18"/>
    <property type="match status" value="1"/>
</dbReference>
<dbReference type="SUPFAM" id="SSF52080">
    <property type="entry name" value="Ribosomal proteins L15p and L18e"/>
    <property type="match status" value="1"/>
</dbReference>
<dbReference type="PROSITE" id="PS01106">
    <property type="entry name" value="RIBOSOMAL_L18E"/>
    <property type="match status" value="1"/>
</dbReference>